<organism>
    <name type="scientific">Escherichia coli O8 (strain IAI1)</name>
    <dbReference type="NCBI Taxonomy" id="585034"/>
    <lineage>
        <taxon>Bacteria</taxon>
        <taxon>Pseudomonadati</taxon>
        <taxon>Pseudomonadota</taxon>
        <taxon>Gammaproteobacteria</taxon>
        <taxon>Enterobacterales</taxon>
        <taxon>Enterobacteriaceae</taxon>
        <taxon>Escherichia</taxon>
    </lineage>
</organism>
<accession>B7M3I2</accession>
<evidence type="ECO:0000255" key="1">
    <source>
        <dbReference type="HAMAP-Rule" id="MF_00254"/>
    </source>
</evidence>
<protein>
    <recommendedName>
        <fullName evidence="1">Glycine--tRNA ligase alpha subunit</fullName>
        <ecNumber evidence="1">6.1.1.14</ecNumber>
    </recommendedName>
    <alternativeName>
        <fullName evidence="1">Glycyl-tRNA synthetase alpha subunit</fullName>
        <shortName evidence="1">GlyRS</shortName>
    </alternativeName>
</protein>
<dbReference type="EC" id="6.1.1.14" evidence="1"/>
<dbReference type="EMBL" id="CU928160">
    <property type="protein sequence ID" value="CAR00521.1"/>
    <property type="molecule type" value="Genomic_DNA"/>
</dbReference>
<dbReference type="RefSeq" id="WP_001168544.1">
    <property type="nucleotide sequence ID" value="NC_011741.1"/>
</dbReference>
<dbReference type="SMR" id="B7M3I2"/>
<dbReference type="GeneID" id="93778290"/>
<dbReference type="KEGG" id="ecr:ECIAI1_3724"/>
<dbReference type="HOGENOM" id="CLU_057066_1_0_6"/>
<dbReference type="GO" id="GO:0005829">
    <property type="term" value="C:cytosol"/>
    <property type="evidence" value="ECO:0007669"/>
    <property type="project" value="TreeGrafter"/>
</dbReference>
<dbReference type="GO" id="GO:0005524">
    <property type="term" value="F:ATP binding"/>
    <property type="evidence" value="ECO:0007669"/>
    <property type="project" value="UniProtKB-UniRule"/>
</dbReference>
<dbReference type="GO" id="GO:0004820">
    <property type="term" value="F:glycine-tRNA ligase activity"/>
    <property type="evidence" value="ECO:0007669"/>
    <property type="project" value="UniProtKB-UniRule"/>
</dbReference>
<dbReference type="GO" id="GO:0006426">
    <property type="term" value="P:glycyl-tRNA aminoacylation"/>
    <property type="evidence" value="ECO:0007669"/>
    <property type="project" value="UniProtKB-UniRule"/>
</dbReference>
<dbReference type="CDD" id="cd00733">
    <property type="entry name" value="GlyRS_alpha_core"/>
    <property type="match status" value="1"/>
</dbReference>
<dbReference type="FunFam" id="1.20.58.180:FF:000001">
    <property type="entry name" value="Glycine--tRNA ligase alpha subunit"/>
    <property type="match status" value="1"/>
</dbReference>
<dbReference type="FunFam" id="3.30.930.10:FF:000006">
    <property type="entry name" value="Glycine--tRNA ligase alpha subunit"/>
    <property type="match status" value="1"/>
</dbReference>
<dbReference type="Gene3D" id="3.30.930.10">
    <property type="entry name" value="Bira Bifunctional Protein, Domain 2"/>
    <property type="match status" value="1"/>
</dbReference>
<dbReference type="Gene3D" id="1.20.58.180">
    <property type="entry name" value="Class II aaRS and biotin synthetases, domain 2"/>
    <property type="match status" value="1"/>
</dbReference>
<dbReference type="HAMAP" id="MF_00254">
    <property type="entry name" value="Gly_tRNA_synth_alpha"/>
    <property type="match status" value="1"/>
</dbReference>
<dbReference type="InterPro" id="IPR045864">
    <property type="entry name" value="aa-tRNA-synth_II/BPL/LPL"/>
</dbReference>
<dbReference type="InterPro" id="IPR006194">
    <property type="entry name" value="Gly-tRNA-synth_heterodimer"/>
</dbReference>
<dbReference type="InterPro" id="IPR002310">
    <property type="entry name" value="Gly-tRNA_ligase_asu"/>
</dbReference>
<dbReference type="NCBIfam" id="TIGR00388">
    <property type="entry name" value="glyQ"/>
    <property type="match status" value="1"/>
</dbReference>
<dbReference type="NCBIfam" id="NF006827">
    <property type="entry name" value="PRK09348.1"/>
    <property type="match status" value="1"/>
</dbReference>
<dbReference type="PANTHER" id="PTHR30075:SF2">
    <property type="entry name" value="GLYCINE--TRNA LIGASE, CHLOROPLASTIC_MITOCHONDRIAL 2"/>
    <property type="match status" value="1"/>
</dbReference>
<dbReference type="PANTHER" id="PTHR30075">
    <property type="entry name" value="GLYCYL-TRNA SYNTHETASE"/>
    <property type="match status" value="1"/>
</dbReference>
<dbReference type="Pfam" id="PF02091">
    <property type="entry name" value="tRNA-synt_2e"/>
    <property type="match status" value="1"/>
</dbReference>
<dbReference type="PRINTS" id="PR01044">
    <property type="entry name" value="TRNASYNTHGA"/>
</dbReference>
<dbReference type="SUPFAM" id="SSF55681">
    <property type="entry name" value="Class II aaRS and biotin synthetases"/>
    <property type="match status" value="1"/>
</dbReference>
<dbReference type="PROSITE" id="PS50861">
    <property type="entry name" value="AA_TRNA_LIGASE_II_GLYAB"/>
    <property type="match status" value="1"/>
</dbReference>
<sequence length="303" mass="34716">MQKFDTRTFQGLILTLQDYWARQGCTIVQPLDMEVGAGTSHPMTCLRALGPEPMAAAYVQPSRRPTDGRYGENPNRLQHYYQFQVVIKPSPDNIQELYLGSLKELGMDPTIHDIRFVEDNWENPTLGAWGLGWEVWLNGMEVTQFTYFQQVGGLECKPVTGEITYGLERLAMYIQGVDSVYDLVWSDGPLGKTTYGDVFHQNEVEQSTYNFEYADVDFLFTCFEQYEKEAQQLLALENPLPLPAYERILKAAHSFNLLDARKAISVTERQRYILRIRTLTKAVAEAYYASREALGFPMCNKDK</sequence>
<feature type="chain" id="PRO_1000197196" description="Glycine--tRNA ligase alpha subunit">
    <location>
        <begin position="1"/>
        <end position="303"/>
    </location>
</feature>
<proteinExistence type="inferred from homology"/>
<gene>
    <name evidence="1" type="primary">glyQ</name>
    <name type="ordered locus">ECIAI1_3724</name>
</gene>
<comment type="catalytic activity">
    <reaction evidence="1">
        <text>tRNA(Gly) + glycine + ATP = glycyl-tRNA(Gly) + AMP + diphosphate</text>
        <dbReference type="Rhea" id="RHEA:16013"/>
        <dbReference type="Rhea" id="RHEA-COMP:9664"/>
        <dbReference type="Rhea" id="RHEA-COMP:9683"/>
        <dbReference type="ChEBI" id="CHEBI:30616"/>
        <dbReference type="ChEBI" id="CHEBI:33019"/>
        <dbReference type="ChEBI" id="CHEBI:57305"/>
        <dbReference type="ChEBI" id="CHEBI:78442"/>
        <dbReference type="ChEBI" id="CHEBI:78522"/>
        <dbReference type="ChEBI" id="CHEBI:456215"/>
        <dbReference type="EC" id="6.1.1.14"/>
    </reaction>
</comment>
<comment type="subunit">
    <text evidence="1">Tetramer of two alpha and two beta subunits.</text>
</comment>
<comment type="subcellular location">
    <subcellularLocation>
        <location evidence="1">Cytoplasm</location>
    </subcellularLocation>
</comment>
<comment type="similarity">
    <text evidence="1">Belongs to the class-II aminoacyl-tRNA synthetase family.</text>
</comment>
<keyword id="KW-0030">Aminoacyl-tRNA synthetase</keyword>
<keyword id="KW-0067">ATP-binding</keyword>
<keyword id="KW-0963">Cytoplasm</keyword>
<keyword id="KW-0436">Ligase</keyword>
<keyword id="KW-0547">Nucleotide-binding</keyword>
<keyword id="KW-0648">Protein biosynthesis</keyword>
<reference key="1">
    <citation type="journal article" date="2009" name="PLoS Genet.">
        <title>Organised genome dynamics in the Escherichia coli species results in highly diverse adaptive paths.</title>
        <authorList>
            <person name="Touchon M."/>
            <person name="Hoede C."/>
            <person name="Tenaillon O."/>
            <person name="Barbe V."/>
            <person name="Baeriswyl S."/>
            <person name="Bidet P."/>
            <person name="Bingen E."/>
            <person name="Bonacorsi S."/>
            <person name="Bouchier C."/>
            <person name="Bouvet O."/>
            <person name="Calteau A."/>
            <person name="Chiapello H."/>
            <person name="Clermont O."/>
            <person name="Cruveiller S."/>
            <person name="Danchin A."/>
            <person name="Diard M."/>
            <person name="Dossat C."/>
            <person name="Karoui M.E."/>
            <person name="Frapy E."/>
            <person name="Garry L."/>
            <person name="Ghigo J.M."/>
            <person name="Gilles A.M."/>
            <person name="Johnson J."/>
            <person name="Le Bouguenec C."/>
            <person name="Lescat M."/>
            <person name="Mangenot S."/>
            <person name="Martinez-Jehanne V."/>
            <person name="Matic I."/>
            <person name="Nassif X."/>
            <person name="Oztas S."/>
            <person name="Petit M.A."/>
            <person name="Pichon C."/>
            <person name="Rouy Z."/>
            <person name="Ruf C.S."/>
            <person name="Schneider D."/>
            <person name="Tourret J."/>
            <person name="Vacherie B."/>
            <person name="Vallenet D."/>
            <person name="Medigue C."/>
            <person name="Rocha E.P.C."/>
            <person name="Denamur E."/>
        </authorList>
    </citation>
    <scope>NUCLEOTIDE SEQUENCE [LARGE SCALE GENOMIC DNA]</scope>
    <source>
        <strain>IAI1</strain>
    </source>
</reference>
<name>SYGA_ECO8A</name>